<proteinExistence type="inferred from homology"/>
<protein>
    <recommendedName>
        <fullName evidence="1">Formimidoylglutamase</fullName>
        <ecNumber evidence="1">3.5.3.8</ecNumber>
    </recommendedName>
    <alternativeName>
        <fullName evidence="1">Formiminoglutamase</fullName>
    </alternativeName>
    <alternativeName>
        <fullName evidence="1">Formiminoglutamate hydrolase</fullName>
    </alternativeName>
</protein>
<comment type="function">
    <text evidence="1">Catalyzes the conversion of N-formimidoyl-L-glutamate to L-glutamate and formamide.</text>
</comment>
<comment type="catalytic activity">
    <reaction evidence="1">
        <text>N-formimidoyl-L-glutamate + H2O = formamide + L-glutamate</text>
        <dbReference type="Rhea" id="RHEA:22492"/>
        <dbReference type="ChEBI" id="CHEBI:15377"/>
        <dbReference type="ChEBI" id="CHEBI:16397"/>
        <dbReference type="ChEBI" id="CHEBI:29985"/>
        <dbReference type="ChEBI" id="CHEBI:58928"/>
        <dbReference type="EC" id="3.5.3.8"/>
    </reaction>
</comment>
<comment type="cofactor">
    <cofactor evidence="1">
        <name>Mn(2+)</name>
        <dbReference type="ChEBI" id="CHEBI:29035"/>
    </cofactor>
    <text evidence="1">Binds 2 manganese ions per subunit.</text>
</comment>
<comment type="pathway">
    <text evidence="1">Amino-acid degradation; L-histidine degradation into L-glutamate; L-glutamate from N-formimidoyl-L-glutamate (hydrolase route): step 1/1.</text>
</comment>
<comment type="similarity">
    <text evidence="1">Belongs to the arginase family.</text>
</comment>
<gene>
    <name evidence="1" type="primary">hutG</name>
    <name type="ordered locus">SeHA_C0915</name>
</gene>
<name>HUTG_SALHS</name>
<feature type="chain" id="PRO_1000133009" description="Formimidoylglutamase">
    <location>
        <begin position="1"/>
        <end position="313"/>
    </location>
</feature>
<feature type="binding site" evidence="1">
    <location>
        <position position="130"/>
    </location>
    <ligand>
        <name>Mn(2+)</name>
        <dbReference type="ChEBI" id="CHEBI:29035"/>
        <label>1</label>
    </ligand>
</feature>
<feature type="binding site" evidence="1">
    <location>
        <position position="155"/>
    </location>
    <ligand>
        <name>Mn(2+)</name>
        <dbReference type="ChEBI" id="CHEBI:29035"/>
        <label>1</label>
    </ligand>
</feature>
<feature type="binding site" evidence="1">
    <location>
        <position position="155"/>
    </location>
    <ligand>
        <name>Mn(2+)</name>
        <dbReference type="ChEBI" id="CHEBI:29035"/>
        <label>2</label>
    </ligand>
</feature>
<feature type="binding site" evidence="1">
    <location>
        <position position="157"/>
    </location>
    <ligand>
        <name>Mn(2+)</name>
        <dbReference type="ChEBI" id="CHEBI:29035"/>
        <label>2</label>
    </ligand>
</feature>
<feature type="binding site" evidence="1">
    <location>
        <position position="159"/>
    </location>
    <ligand>
        <name>Mn(2+)</name>
        <dbReference type="ChEBI" id="CHEBI:29035"/>
        <label>1</label>
    </ligand>
</feature>
<feature type="binding site" evidence="1">
    <location>
        <position position="241"/>
    </location>
    <ligand>
        <name>Mn(2+)</name>
        <dbReference type="ChEBI" id="CHEBI:29035"/>
        <label>1</label>
    </ligand>
</feature>
<feature type="binding site" evidence="1">
    <location>
        <position position="241"/>
    </location>
    <ligand>
        <name>Mn(2+)</name>
        <dbReference type="ChEBI" id="CHEBI:29035"/>
        <label>2</label>
    </ligand>
</feature>
<feature type="binding site" evidence="1">
    <location>
        <position position="243"/>
    </location>
    <ligand>
        <name>Mn(2+)</name>
        <dbReference type="ChEBI" id="CHEBI:29035"/>
        <label>2</label>
    </ligand>
</feature>
<dbReference type="EC" id="3.5.3.8" evidence="1"/>
<dbReference type="EMBL" id="CP001120">
    <property type="protein sequence ID" value="ACF66700.1"/>
    <property type="molecule type" value="Genomic_DNA"/>
</dbReference>
<dbReference type="RefSeq" id="WP_000195682.1">
    <property type="nucleotide sequence ID" value="NC_011083.1"/>
</dbReference>
<dbReference type="SMR" id="B4TC42"/>
<dbReference type="KEGG" id="seh:SeHA_C0915"/>
<dbReference type="HOGENOM" id="CLU_039478_2_0_6"/>
<dbReference type="UniPathway" id="UPA00379">
    <property type="reaction ID" value="UER00552"/>
</dbReference>
<dbReference type="Proteomes" id="UP000001866">
    <property type="component" value="Chromosome"/>
</dbReference>
<dbReference type="GO" id="GO:0008783">
    <property type="term" value="F:agmatinase activity"/>
    <property type="evidence" value="ECO:0007669"/>
    <property type="project" value="TreeGrafter"/>
</dbReference>
<dbReference type="GO" id="GO:0050415">
    <property type="term" value="F:formimidoylglutamase activity"/>
    <property type="evidence" value="ECO:0007669"/>
    <property type="project" value="UniProtKB-UniRule"/>
</dbReference>
<dbReference type="GO" id="GO:0030145">
    <property type="term" value="F:manganese ion binding"/>
    <property type="evidence" value="ECO:0007669"/>
    <property type="project" value="UniProtKB-UniRule"/>
</dbReference>
<dbReference type="GO" id="GO:0019556">
    <property type="term" value="P:L-histidine catabolic process to glutamate and formamide"/>
    <property type="evidence" value="ECO:0007669"/>
    <property type="project" value="UniProtKB-UniPathway"/>
</dbReference>
<dbReference type="GO" id="GO:0019557">
    <property type="term" value="P:L-histidine catabolic process to glutamate and formate"/>
    <property type="evidence" value="ECO:0007669"/>
    <property type="project" value="UniProtKB-UniPathway"/>
</dbReference>
<dbReference type="GO" id="GO:0033389">
    <property type="term" value="P:putrescine biosynthetic process from arginine, via agmatine"/>
    <property type="evidence" value="ECO:0007669"/>
    <property type="project" value="TreeGrafter"/>
</dbReference>
<dbReference type="CDD" id="cd09988">
    <property type="entry name" value="Formimidoylglutamase"/>
    <property type="match status" value="1"/>
</dbReference>
<dbReference type="FunFam" id="3.40.800.10:FF:000010">
    <property type="entry name" value="Formimidoylglutamase"/>
    <property type="match status" value="1"/>
</dbReference>
<dbReference type="Gene3D" id="3.40.800.10">
    <property type="entry name" value="Ureohydrolase domain"/>
    <property type="match status" value="1"/>
</dbReference>
<dbReference type="HAMAP" id="MF_00737">
    <property type="entry name" value="Formimidoylglutam"/>
    <property type="match status" value="1"/>
</dbReference>
<dbReference type="InterPro" id="IPR005923">
    <property type="entry name" value="HutG"/>
</dbReference>
<dbReference type="InterPro" id="IPR006035">
    <property type="entry name" value="Ureohydrolase"/>
</dbReference>
<dbReference type="InterPro" id="IPR023696">
    <property type="entry name" value="Ureohydrolase_dom_sf"/>
</dbReference>
<dbReference type="NCBIfam" id="TIGR01227">
    <property type="entry name" value="hutG"/>
    <property type="match status" value="1"/>
</dbReference>
<dbReference type="PANTHER" id="PTHR11358">
    <property type="entry name" value="ARGINASE/AGMATINASE"/>
    <property type="match status" value="1"/>
</dbReference>
<dbReference type="PANTHER" id="PTHR11358:SF35">
    <property type="entry name" value="FORMIMIDOYLGLUTAMASE"/>
    <property type="match status" value="1"/>
</dbReference>
<dbReference type="Pfam" id="PF00491">
    <property type="entry name" value="Arginase"/>
    <property type="match status" value="1"/>
</dbReference>
<dbReference type="PIRSF" id="PIRSF036979">
    <property type="entry name" value="Arginase"/>
    <property type="match status" value="1"/>
</dbReference>
<dbReference type="SUPFAM" id="SSF52768">
    <property type="entry name" value="Arginase/deacetylase"/>
    <property type="match status" value="1"/>
</dbReference>
<dbReference type="PROSITE" id="PS51409">
    <property type="entry name" value="ARGINASE_2"/>
    <property type="match status" value="1"/>
</dbReference>
<evidence type="ECO:0000255" key="1">
    <source>
        <dbReference type="HAMAP-Rule" id="MF_00737"/>
    </source>
</evidence>
<reference key="1">
    <citation type="journal article" date="2011" name="J. Bacteriol.">
        <title>Comparative genomics of 28 Salmonella enterica isolates: evidence for CRISPR-mediated adaptive sublineage evolution.</title>
        <authorList>
            <person name="Fricke W.F."/>
            <person name="Mammel M.K."/>
            <person name="McDermott P.F."/>
            <person name="Tartera C."/>
            <person name="White D.G."/>
            <person name="Leclerc J.E."/>
            <person name="Ravel J."/>
            <person name="Cebula T.A."/>
        </authorList>
    </citation>
    <scope>NUCLEOTIDE SEQUENCE [LARGE SCALE GENOMIC DNA]</scope>
    <source>
        <strain>SL476</strain>
    </source>
</reference>
<organism>
    <name type="scientific">Salmonella heidelberg (strain SL476)</name>
    <dbReference type="NCBI Taxonomy" id="454169"/>
    <lineage>
        <taxon>Bacteria</taxon>
        <taxon>Pseudomonadati</taxon>
        <taxon>Pseudomonadota</taxon>
        <taxon>Gammaproteobacteria</taxon>
        <taxon>Enterobacterales</taxon>
        <taxon>Enterobacteriaceae</taxon>
        <taxon>Salmonella</taxon>
    </lineage>
</organism>
<keyword id="KW-0369">Histidine metabolism</keyword>
<keyword id="KW-0378">Hydrolase</keyword>
<keyword id="KW-0464">Manganese</keyword>
<keyword id="KW-0479">Metal-binding</keyword>
<accession>B4TC42</accession>
<sequence>MTQWYPASPALWQGRDDSIEAPDARRLFQTVTRSETFSPENWQQKIALMGFACDEGVKRNAGRPGAAGAPDALRKALANMASHQGHERLVDLGNWVAPTPDLEGAQQALRDAVSRCLRAGMRTLVLGGGHETAFGHGAGVLDAFAQESVGIINLDAHLDLRQTDRATSGTPFRQLAQLCDAQSRAFHYACFGVSRAANTQALWREAQWRNVTVVEDLDCHDALAQMAQFIDKVDKIYLTIDLDVLPVWEMPAVSAPAALGVPLIQVLRLIEPVCRSGKLQAADLVEFNPRFDEDGAAARVAARLGWQIAHWWR</sequence>